<gene>
    <name evidence="1" type="primary">tpiA</name>
    <name type="ordered locus">Cj1401c</name>
</gene>
<feature type="chain" id="PRO_0000090198" description="Triosephosphate isomerase">
    <location>
        <begin position="1"/>
        <end position="223"/>
    </location>
</feature>
<feature type="active site" description="Electrophile" evidence="1">
    <location>
        <position position="86"/>
    </location>
</feature>
<feature type="active site" description="Proton acceptor" evidence="1">
    <location>
        <position position="151"/>
    </location>
</feature>
<feature type="binding site" evidence="1">
    <location>
        <begin position="6"/>
        <end position="8"/>
    </location>
    <ligand>
        <name>substrate</name>
    </ligand>
</feature>
<feature type="binding site" evidence="1">
    <location>
        <position position="157"/>
    </location>
    <ligand>
        <name>substrate</name>
    </ligand>
</feature>
<feature type="binding site" evidence="1">
    <location>
        <position position="187"/>
    </location>
    <ligand>
        <name>substrate</name>
    </ligand>
</feature>
<name>TPIS_CAMJE</name>
<keyword id="KW-0963">Cytoplasm</keyword>
<keyword id="KW-0312">Gluconeogenesis</keyword>
<keyword id="KW-0324">Glycolysis</keyword>
<keyword id="KW-0413">Isomerase</keyword>
<keyword id="KW-1185">Reference proteome</keyword>
<accession>Q9PMQ6</accession>
<accession>Q0P8L3</accession>
<evidence type="ECO:0000255" key="1">
    <source>
        <dbReference type="HAMAP-Rule" id="MF_00147"/>
    </source>
</evidence>
<proteinExistence type="inferred from homology"/>
<dbReference type="EC" id="5.3.1.1" evidence="1"/>
<dbReference type="EMBL" id="AL111168">
    <property type="protein sequence ID" value="CAL35510.1"/>
    <property type="molecule type" value="Genomic_DNA"/>
</dbReference>
<dbReference type="PIR" id="A81285">
    <property type="entry name" value="A81285"/>
</dbReference>
<dbReference type="RefSeq" id="WP_002855528.1">
    <property type="nucleotide sequence ID" value="NZ_SZUC01000003.1"/>
</dbReference>
<dbReference type="RefSeq" id="YP_002344784.1">
    <property type="nucleotide sequence ID" value="NC_002163.1"/>
</dbReference>
<dbReference type="SMR" id="Q9PMQ6"/>
<dbReference type="IntAct" id="Q9PMQ6">
    <property type="interactions" value="2"/>
</dbReference>
<dbReference type="STRING" id="192222.Cj1401c"/>
<dbReference type="PaxDb" id="192222-Cj1401c"/>
<dbReference type="EnsemblBacteria" id="CAL35510">
    <property type="protein sequence ID" value="CAL35510"/>
    <property type="gene ID" value="Cj1401c"/>
</dbReference>
<dbReference type="GeneID" id="905690"/>
<dbReference type="KEGG" id="cje:Cj1401c"/>
<dbReference type="PATRIC" id="fig|192222.6.peg.1382"/>
<dbReference type="eggNOG" id="COG0149">
    <property type="taxonomic scope" value="Bacteria"/>
</dbReference>
<dbReference type="HOGENOM" id="CLU_024251_2_3_7"/>
<dbReference type="OrthoDB" id="9809429at2"/>
<dbReference type="UniPathway" id="UPA00109">
    <property type="reaction ID" value="UER00189"/>
</dbReference>
<dbReference type="UniPathway" id="UPA00138"/>
<dbReference type="Proteomes" id="UP000000799">
    <property type="component" value="Chromosome"/>
</dbReference>
<dbReference type="GO" id="GO:0005829">
    <property type="term" value="C:cytosol"/>
    <property type="evidence" value="ECO:0007669"/>
    <property type="project" value="TreeGrafter"/>
</dbReference>
<dbReference type="GO" id="GO:0004807">
    <property type="term" value="F:triose-phosphate isomerase activity"/>
    <property type="evidence" value="ECO:0007669"/>
    <property type="project" value="UniProtKB-UniRule"/>
</dbReference>
<dbReference type="GO" id="GO:0006094">
    <property type="term" value="P:gluconeogenesis"/>
    <property type="evidence" value="ECO:0007669"/>
    <property type="project" value="UniProtKB-UniRule"/>
</dbReference>
<dbReference type="GO" id="GO:0046166">
    <property type="term" value="P:glyceraldehyde-3-phosphate biosynthetic process"/>
    <property type="evidence" value="ECO:0007669"/>
    <property type="project" value="TreeGrafter"/>
</dbReference>
<dbReference type="GO" id="GO:0019563">
    <property type="term" value="P:glycerol catabolic process"/>
    <property type="evidence" value="ECO:0007669"/>
    <property type="project" value="TreeGrafter"/>
</dbReference>
<dbReference type="GO" id="GO:0006096">
    <property type="term" value="P:glycolytic process"/>
    <property type="evidence" value="ECO:0007669"/>
    <property type="project" value="UniProtKB-UniRule"/>
</dbReference>
<dbReference type="CDD" id="cd00311">
    <property type="entry name" value="TIM"/>
    <property type="match status" value="1"/>
</dbReference>
<dbReference type="Gene3D" id="3.20.20.70">
    <property type="entry name" value="Aldolase class I"/>
    <property type="match status" value="1"/>
</dbReference>
<dbReference type="HAMAP" id="MF_00147_B">
    <property type="entry name" value="TIM_B"/>
    <property type="match status" value="1"/>
</dbReference>
<dbReference type="InterPro" id="IPR013785">
    <property type="entry name" value="Aldolase_TIM"/>
</dbReference>
<dbReference type="InterPro" id="IPR035990">
    <property type="entry name" value="TIM_sf"/>
</dbReference>
<dbReference type="InterPro" id="IPR022896">
    <property type="entry name" value="TrioseP_Isoase_bac/euk"/>
</dbReference>
<dbReference type="InterPro" id="IPR000652">
    <property type="entry name" value="Triosephosphate_isomerase"/>
</dbReference>
<dbReference type="InterPro" id="IPR020861">
    <property type="entry name" value="Triosephosphate_isomerase_AS"/>
</dbReference>
<dbReference type="NCBIfam" id="NF000728">
    <property type="entry name" value="PRK00042.3-2"/>
    <property type="match status" value="1"/>
</dbReference>
<dbReference type="PANTHER" id="PTHR21139">
    <property type="entry name" value="TRIOSEPHOSPHATE ISOMERASE"/>
    <property type="match status" value="1"/>
</dbReference>
<dbReference type="PANTHER" id="PTHR21139:SF42">
    <property type="entry name" value="TRIOSEPHOSPHATE ISOMERASE"/>
    <property type="match status" value="1"/>
</dbReference>
<dbReference type="Pfam" id="PF00121">
    <property type="entry name" value="TIM"/>
    <property type="match status" value="1"/>
</dbReference>
<dbReference type="SUPFAM" id="SSF51351">
    <property type="entry name" value="Triosephosphate isomerase (TIM)"/>
    <property type="match status" value="1"/>
</dbReference>
<dbReference type="PROSITE" id="PS00171">
    <property type="entry name" value="TIM_1"/>
    <property type="match status" value="1"/>
</dbReference>
<dbReference type="PROSITE" id="PS51440">
    <property type="entry name" value="TIM_2"/>
    <property type="match status" value="1"/>
</dbReference>
<protein>
    <recommendedName>
        <fullName evidence="1">Triosephosphate isomerase</fullName>
        <shortName evidence="1">TIM</shortName>
        <shortName evidence="1">TPI</shortName>
        <ecNumber evidence="1">5.3.1.1</ecNumber>
    </recommendedName>
    <alternativeName>
        <fullName evidence="1">Triose-phosphate isomerase</fullName>
    </alternativeName>
</protein>
<organism>
    <name type="scientific">Campylobacter jejuni subsp. jejuni serotype O:2 (strain ATCC 700819 / NCTC 11168)</name>
    <dbReference type="NCBI Taxonomy" id="192222"/>
    <lineage>
        <taxon>Bacteria</taxon>
        <taxon>Pseudomonadati</taxon>
        <taxon>Campylobacterota</taxon>
        <taxon>Epsilonproteobacteria</taxon>
        <taxon>Campylobacterales</taxon>
        <taxon>Campylobacteraceae</taxon>
        <taxon>Campylobacter</taxon>
    </lineage>
</organism>
<reference key="1">
    <citation type="journal article" date="2000" name="Nature">
        <title>The genome sequence of the food-borne pathogen Campylobacter jejuni reveals hypervariable sequences.</title>
        <authorList>
            <person name="Parkhill J."/>
            <person name="Wren B.W."/>
            <person name="Mungall K.L."/>
            <person name="Ketley J.M."/>
            <person name="Churcher C.M."/>
            <person name="Basham D."/>
            <person name="Chillingworth T."/>
            <person name="Davies R.M."/>
            <person name="Feltwell T."/>
            <person name="Holroyd S."/>
            <person name="Jagels K."/>
            <person name="Karlyshev A.V."/>
            <person name="Moule S."/>
            <person name="Pallen M.J."/>
            <person name="Penn C.W."/>
            <person name="Quail M.A."/>
            <person name="Rajandream M.A."/>
            <person name="Rutherford K.M."/>
            <person name="van Vliet A.H.M."/>
            <person name="Whitehead S."/>
            <person name="Barrell B.G."/>
        </authorList>
    </citation>
    <scope>NUCLEOTIDE SEQUENCE [LARGE SCALE GENOMIC DNA]</scope>
    <source>
        <strain>ATCC 700819 / NCTC 11168</strain>
    </source>
</reference>
<sequence>MIFAANLKCNHTRASFKIYAKILNKTMGVKCDDIIVFPPSIAFLENENNFIQGAQNFYPCVNGAFTGELGKEHLDEFGIKCVLIGHSERRALGDEEFIKAKFDFAKEHGYKIVFCIGENLDTKNSGKTLEFLKKQLEIIDLNYEKLIIAYEPIYSIGTGVSAQSTDIAKVLEFLASLTKVPLLYGGSVNENNIKEILSVNHCGGVLIGSAALKVENFIKLIKG</sequence>
<comment type="function">
    <text evidence="1">Involved in the gluconeogenesis. Catalyzes stereospecifically the conversion of dihydroxyacetone phosphate (DHAP) to D-glyceraldehyde-3-phosphate (G3P).</text>
</comment>
<comment type="catalytic activity">
    <reaction evidence="1">
        <text>D-glyceraldehyde 3-phosphate = dihydroxyacetone phosphate</text>
        <dbReference type="Rhea" id="RHEA:18585"/>
        <dbReference type="ChEBI" id="CHEBI:57642"/>
        <dbReference type="ChEBI" id="CHEBI:59776"/>
        <dbReference type="EC" id="5.3.1.1"/>
    </reaction>
</comment>
<comment type="pathway">
    <text evidence="1">Carbohydrate biosynthesis; gluconeogenesis.</text>
</comment>
<comment type="pathway">
    <text evidence="1">Carbohydrate degradation; glycolysis; D-glyceraldehyde 3-phosphate from glycerone phosphate: step 1/1.</text>
</comment>
<comment type="subunit">
    <text evidence="1">Homodimer.</text>
</comment>
<comment type="subcellular location">
    <subcellularLocation>
        <location evidence="1">Cytoplasm</location>
    </subcellularLocation>
</comment>
<comment type="similarity">
    <text evidence="1">Belongs to the triosephosphate isomerase family.</text>
</comment>